<evidence type="ECO:0000256" key="1">
    <source>
        <dbReference type="SAM" id="MobiDB-lite"/>
    </source>
</evidence>
<evidence type="ECO:0000269" key="2">
    <source>
    </source>
</evidence>
<evidence type="ECO:0000303" key="3">
    <source>
    </source>
</evidence>
<evidence type="ECO:0000305" key="4"/>
<evidence type="ECO:0000312" key="5">
    <source>
        <dbReference type="EMBL" id="EAL66495.1"/>
    </source>
</evidence>
<feature type="chain" id="PRO_0000445759" description="TSET complex member tstB">
    <location>
        <begin position="1"/>
        <end position="877"/>
    </location>
</feature>
<feature type="region of interest" description="Disordered" evidence="1">
    <location>
        <begin position="398"/>
        <end position="437"/>
    </location>
</feature>
<feature type="region of interest" description="Disordered" evidence="1">
    <location>
        <begin position="522"/>
        <end position="557"/>
    </location>
</feature>
<feature type="compositionally biased region" description="Low complexity" evidence="1">
    <location>
        <begin position="412"/>
        <end position="437"/>
    </location>
</feature>
<feature type="compositionally biased region" description="Low complexity" evidence="1">
    <location>
        <begin position="529"/>
        <end position="556"/>
    </location>
</feature>
<comment type="subunit">
    <text evidence="2">Component of the TSET complex, a heterohexamer composed of tstA, tstB, tstC, tstD, tstE and tstF, which may act in plasma membrane turnover. tstA, tstB, tstC and tstD are likely to be the core complex members with tstE and tstF acting as associated scaffold proteins.</text>
</comment>
<protein>
    <recommendedName>
        <fullName evidence="4">TSET complex member tstB</fullName>
    </recommendedName>
    <alternativeName>
        <fullName evidence="3">Protein TSAUCER</fullName>
    </alternativeName>
</protein>
<reference key="1">
    <citation type="journal article" date="2005" name="Nature">
        <title>The genome of the social amoeba Dictyostelium discoideum.</title>
        <authorList>
            <person name="Eichinger L."/>
            <person name="Pachebat J.A."/>
            <person name="Gloeckner G."/>
            <person name="Rajandream M.A."/>
            <person name="Sucgang R."/>
            <person name="Berriman M."/>
            <person name="Song J."/>
            <person name="Olsen R."/>
            <person name="Szafranski K."/>
            <person name="Xu Q."/>
            <person name="Tunggal B."/>
            <person name="Kummerfeld S."/>
            <person name="Madera M."/>
            <person name="Konfortov B.A."/>
            <person name="Rivero F."/>
            <person name="Bankier A.T."/>
            <person name="Lehmann R."/>
            <person name="Hamlin N."/>
            <person name="Davies R."/>
            <person name="Gaudet P."/>
            <person name="Fey P."/>
            <person name="Pilcher K."/>
            <person name="Chen G."/>
            <person name="Saunders D."/>
            <person name="Sodergren E.J."/>
            <person name="Davis P."/>
            <person name="Kerhornou A."/>
            <person name="Nie X."/>
            <person name="Hall N."/>
            <person name="Anjard C."/>
            <person name="Hemphill L."/>
            <person name="Bason N."/>
            <person name="Farbrother P."/>
            <person name="Desany B."/>
            <person name="Just E."/>
            <person name="Morio T."/>
            <person name="Rost R."/>
            <person name="Churcher C.M."/>
            <person name="Cooper J."/>
            <person name="Haydock S."/>
            <person name="van Driessche N."/>
            <person name="Cronin A."/>
            <person name="Goodhead I."/>
            <person name="Muzny D.M."/>
            <person name="Mourier T."/>
            <person name="Pain A."/>
            <person name="Lu M."/>
            <person name="Harper D."/>
            <person name="Lindsay R."/>
            <person name="Hauser H."/>
            <person name="James K.D."/>
            <person name="Quiles M."/>
            <person name="Madan Babu M."/>
            <person name="Saito T."/>
            <person name="Buchrieser C."/>
            <person name="Wardroper A."/>
            <person name="Felder M."/>
            <person name="Thangavelu M."/>
            <person name="Johnson D."/>
            <person name="Knights A."/>
            <person name="Loulseged H."/>
            <person name="Mungall K.L."/>
            <person name="Oliver K."/>
            <person name="Price C."/>
            <person name="Quail M.A."/>
            <person name="Urushihara H."/>
            <person name="Hernandez J."/>
            <person name="Rabbinowitsch E."/>
            <person name="Steffen D."/>
            <person name="Sanders M."/>
            <person name="Ma J."/>
            <person name="Kohara Y."/>
            <person name="Sharp S."/>
            <person name="Simmonds M.N."/>
            <person name="Spiegler S."/>
            <person name="Tivey A."/>
            <person name="Sugano S."/>
            <person name="White B."/>
            <person name="Walker D."/>
            <person name="Woodward J.R."/>
            <person name="Winckler T."/>
            <person name="Tanaka Y."/>
            <person name="Shaulsky G."/>
            <person name="Schleicher M."/>
            <person name="Weinstock G.M."/>
            <person name="Rosenthal A."/>
            <person name="Cox E.C."/>
            <person name="Chisholm R.L."/>
            <person name="Gibbs R.A."/>
            <person name="Loomis W.F."/>
            <person name="Platzer M."/>
            <person name="Kay R.R."/>
            <person name="Williams J.G."/>
            <person name="Dear P.H."/>
            <person name="Noegel A.A."/>
            <person name="Barrell B.G."/>
            <person name="Kuspa A."/>
        </authorList>
    </citation>
    <scope>NUCLEOTIDE SEQUENCE [LARGE SCALE GENOMIC DNA]</scope>
    <source>
        <strain>AX4</strain>
    </source>
</reference>
<reference evidence="4" key="2">
    <citation type="journal article" date="2014" name="Elife">
        <title>Characterization of TSET, an ancient and widespread membrane trafficking complex.</title>
        <authorList>
            <person name="Hirst J."/>
            <person name="Schlacht A."/>
            <person name="Norcott J.P."/>
            <person name="Traynor D."/>
            <person name="Bloomfield G."/>
            <person name="Antrobus R."/>
            <person name="Kay R.R."/>
            <person name="Dacks J.B."/>
            <person name="Robinson M.S."/>
        </authorList>
    </citation>
    <scope>IDENTIFICATION IN THE TSET COMPLEX</scope>
    <scope>IDENTIFICATION BY MASS SPECTROMETRY</scope>
</reference>
<gene>
    <name evidence="3" type="primary">tstB</name>
    <name evidence="5" type="ORF">DDB0204260</name>
</gene>
<organism>
    <name type="scientific">Dictyostelium discoideum</name>
    <name type="common">Social amoeba</name>
    <dbReference type="NCBI Taxonomy" id="44689"/>
    <lineage>
        <taxon>Eukaryota</taxon>
        <taxon>Amoebozoa</taxon>
        <taxon>Evosea</taxon>
        <taxon>Eumycetozoa</taxon>
        <taxon>Dictyostelia</taxon>
        <taxon>Dictyosteliales</taxon>
        <taxon>Dictyosteliaceae</taxon>
        <taxon>Dictyostelium</taxon>
    </lineage>
</organism>
<proteinExistence type="evidence at protein level"/>
<dbReference type="EMBL" id="AAFI01000076">
    <property type="protein sequence ID" value="EAL66495.1"/>
    <property type="molecule type" value="Genomic_DNA"/>
</dbReference>
<dbReference type="RefSeq" id="XP_640471.1">
    <property type="nucleotide sequence ID" value="XM_635379.1"/>
</dbReference>
<dbReference type="STRING" id="44689.Q54TB8"/>
<dbReference type="PaxDb" id="44689-DDB0204260"/>
<dbReference type="KEGG" id="ddi:DDB_G0281871"/>
<dbReference type="dictyBase" id="DDB_G0281871">
    <property type="gene designation" value="tstB"/>
</dbReference>
<dbReference type="VEuPathDB" id="AmoebaDB:DDB_G0281871"/>
<dbReference type="eggNOG" id="ENOG502QR0J">
    <property type="taxonomic scope" value="Eukaryota"/>
</dbReference>
<dbReference type="HOGENOM" id="CLU_328025_0_0_1"/>
<dbReference type="OMA" id="EDDVWEN"/>
<dbReference type="PRO" id="PR:Q54TB8"/>
<dbReference type="InterPro" id="IPR016024">
    <property type="entry name" value="ARM-type_fold"/>
</dbReference>
<dbReference type="InterPro" id="IPR053296">
    <property type="entry name" value="TSET_member_tstB"/>
</dbReference>
<dbReference type="PANTHER" id="PTHR48151">
    <property type="entry name" value="SH3 DOMAIN-CONTAINING PROTEIN"/>
    <property type="match status" value="1"/>
</dbReference>
<dbReference type="PANTHER" id="PTHR48151:SF3">
    <property type="entry name" value="SH3 DOMAIN-CONTAINING PROTEIN"/>
    <property type="match status" value="1"/>
</dbReference>
<dbReference type="SUPFAM" id="SSF48371">
    <property type="entry name" value="ARM repeat"/>
    <property type="match status" value="1"/>
</dbReference>
<name>TSTB_DICDI</name>
<accession>Q54TB8</accession>
<sequence length="877" mass="99009">MSELSESGSYNSYNSLSAGSPLPLQEIFNGAETKCQSHYLQSRINTNYEQVKQQLKESAEKKNSSKIYSSLQHLTYYKVEKDLLETILRIIDITDDKKTLRLAYYFLGEISQFKHLINNSTEIKNITTIFNKEMQHKDISRKVVSLKTTASVAPNDVLIDANILDVISGILRKVGEDPDKTQKKKGFFTRATTDLGRERSLLQYSCFVACRNRYKNNPSLFMPIVEGIKCVDPVGARHAVSLTLNYALENPSTVAATTKRFIPLLKANKGKEAVYLVDPFARRNFIKLCGHLAATPSPIGNVITMENKDFFQSLCQSVMDAHLSVAFYAINVLSRFSWPTLESAHIDAIQFDSELPHFESLAFQTSLIVGICNKMRIGFNTYSIGAYSNYSMQHGHHHLHHYHQGGSGTVGGSVPSSSSSSSSSSNITTSALSSGSSSNSSLSSQQLLLVQQQQQQLLHQQSNPFLHLACKLISVLSQSYVKYSYPKDSTTQQPIIGDWSFDEKQYQHQSVYPYHHNLSPFTGLPNPISNNNNSSNNTKDQSTTTTTSTTSSSSNSIHPFSSLTQLILNLLNISPSISIRIQALKALVWLCPSNLDQSKLYLETFRSQLRDPYHPTHLFKELFLELYKRIIATPILSPMILELVYDWIDIIPSKCDTSLVCEIWKTIVEFGKVFANEKLLASIFKILDRIVHPDFRVLAMEIQKDIIKFLGEYSNQITFEQPSRFEQCKSRSGSNQQQHLSNMSLNSIIQRLQQYSIFSPWQIRLESIDSLAKIAFQSSTVVKVHIYNFLTLLPNESHGWTTVKSNTSIIVNTLDQLLTCRAKWLPLFKSSDLSQNQIKDLKNDHTNLCLQIGLFFDQLSFDYLPLGIESKKYLGSK</sequence>